<keyword id="KW-0648">Protein biosynthesis</keyword>
<keyword id="KW-0808">Transferase</keyword>
<dbReference type="EC" id="2.1.2.9" evidence="1"/>
<dbReference type="EMBL" id="CP000941">
    <property type="protein sequence ID" value="ACA12802.1"/>
    <property type="molecule type" value="Genomic_DNA"/>
</dbReference>
<dbReference type="RefSeq" id="WP_004086445.1">
    <property type="nucleotide sequence ID" value="NC_010513.1"/>
</dbReference>
<dbReference type="SMR" id="B0U4M3"/>
<dbReference type="KEGG" id="xfm:Xfasm12_1928"/>
<dbReference type="HOGENOM" id="CLU_033347_1_2_6"/>
<dbReference type="GO" id="GO:0005829">
    <property type="term" value="C:cytosol"/>
    <property type="evidence" value="ECO:0007669"/>
    <property type="project" value="TreeGrafter"/>
</dbReference>
<dbReference type="GO" id="GO:0004479">
    <property type="term" value="F:methionyl-tRNA formyltransferase activity"/>
    <property type="evidence" value="ECO:0007669"/>
    <property type="project" value="UniProtKB-UniRule"/>
</dbReference>
<dbReference type="CDD" id="cd08646">
    <property type="entry name" value="FMT_core_Met-tRNA-FMT_N"/>
    <property type="match status" value="1"/>
</dbReference>
<dbReference type="CDD" id="cd08704">
    <property type="entry name" value="Met_tRNA_FMT_C"/>
    <property type="match status" value="1"/>
</dbReference>
<dbReference type="Gene3D" id="3.10.25.10">
    <property type="entry name" value="Formyl transferase, C-terminal domain"/>
    <property type="match status" value="1"/>
</dbReference>
<dbReference type="Gene3D" id="3.40.50.170">
    <property type="entry name" value="Formyl transferase, N-terminal domain"/>
    <property type="match status" value="1"/>
</dbReference>
<dbReference type="HAMAP" id="MF_00182">
    <property type="entry name" value="Formyl_trans"/>
    <property type="match status" value="1"/>
</dbReference>
<dbReference type="InterPro" id="IPR005794">
    <property type="entry name" value="Fmt"/>
</dbReference>
<dbReference type="InterPro" id="IPR005793">
    <property type="entry name" value="Formyl_trans_C"/>
</dbReference>
<dbReference type="InterPro" id="IPR037022">
    <property type="entry name" value="Formyl_trans_C_sf"/>
</dbReference>
<dbReference type="InterPro" id="IPR002376">
    <property type="entry name" value="Formyl_transf_N"/>
</dbReference>
<dbReference type="InterPro" id="IPR036477">
    <property type="entry name" value="Formyl_transf_N_sf"/>
</dbReference>
<dbReference type="InterPro" id="IPR011034">
    <property type="entry name" value="Formyl_transferase-like_C_sf"/>
</dbReference>
<dbReference type="InterPro" id="IPR001555">
    <property type="entry name" value="GART_AS"/>
</dbReference>
<dbReference type="InterPro" id="IPR044135">
    <property type="entry name" value="Met-tRNA-FMT_C"/>
</dbReference>
<dbReference type="InterPro" id="IPR041711">
    <property type="entry name" value="Met-tRNA-FMT_N"/>
</dbReference>
<dbReference type="NCBIfam" id="TIGR00460">
    <property type="entry name" value="fmt"/>
    <property type="match status" value="1"/>
</dbReference>
<dbReference type="PANTHER" id="PTHR11138">
    <property type="entry name" value="METHIONYL-TRNA FORMYLTRANSFERASE"/>
    <property type="match status" value="1"/>
</dbReference>
<dbReference type="PANTHER" id="PTHR11138:SF5">
    <property type="entry name" value="METHIONYL-TRNA FORMYLTRANSFERASE, MITOCHONDRIAL"/>
    <property type="match status" value="1"/>
</dbReference>
<dbReference type="Pfam" id="PF02911">
    <property type="entry name" value="Formyl_trans_C"/>
    <property type="match status" value="1"/>
</dbReference>
<dbReference type="Pfam" id="PF00551">
    <property type="entry name" value="Formyl_trans_N"/>
    <property type="match status" value="1"/>
</dbReference>
<dbReference type="SUPFAM" id="SSF50486">
    <property type="entry name" value="FMT C-terminal domain-like"/>
    <property type="match status" value="1"/>
</dbReference>
<dbReference type="SUPFAM" id="SSF53328">
    <property type="entry name" value="Formyltransferase"/>
    <property type="match status" value="1"/>
</dbReference>
<dbReference type="PROSITE" id="PS00373">
    <property type="entry name" value="GART"/>
    <property type="match status" value="1"/>
</dbReference>
<protein>
    <recommendedName>
        <fullName evidence="1">Methionyl-tRNA formyltransferase</fullName>
        <ecNumber evidence="1">2.1.2.9</ecNumber>
    </recommendedName>
</protein>
<name>FMT_XYLFM</name>
<proteinExistence type="inferred from homology"/>
<gene>
    <name evidence="1" type="primary">fmt</name>
    <name type="ordered locus">Xfasm12_1928</name>
</gene>
<comment type="function">
    <text evidence="1">Attaches a formyl group to the free amino group of methionyl-tRNA(fMet). The formyl group appears to play a dual role in the initiator identity of N-formylmethionyl-tRNA by promoting its recognition by IF2 and preventing the misappropriation of this tRNA by the elongation apparatus.</text>
</comment>
<comment type="catalytic activity">
    <reaction evidence="1">
        <text>L-methionyl-tRNA(fMet) + (6R)-10-formyltetrahydrofolate = N-formyl-L-methionyl-tRNA(fMet) + (6S)-5,6,7,8-tetrahydrofolate + H(+)</text>
        <dbReference type="Rhea" id="RHEA:24380"/>
        <dbReference type="Rhea" id="RHEA-COMP:9952"/>
        <dbReference type="Rhea" id="RHEA-COMP:9953"/>
        <dbReference type="ChEBI" id="CHEBI:15378"/>
        <dbReference type="ChEBI" id="CHEBI:57453"/>
        <dbReference type="ChEBI" id="CHEBI:78530"/>
        <dbReference type="ChEBI" id="CHEBI:78844"/>
        <dbReference type="ChEBI" id="CHEBI:195366"/>
        <dbReference type="EC" id="2.1.2.9"/>
    </reaction>
</comment>
<comment type="similarity">
    <text evidence="1">Belongs to the Fmt family.</text>
</comment>
<accession>B0U4M3</accession>
<organism>
    <name type="scientific">Xylella fastidiosa (strain M12)</name>
    <dbReference type="NCBI Taxonomy" id="405440"/>
    <lineage>
        <taxon>Bacteria</taxon>
        <taxon>Pseudomonadati</taxon>
        <taxon>Pseudomonadota</taxon>
        <taxon>Gammaproteobacteria</taxon>
        <taxon>Lysobacterales</taxon>
        <taxon>Lysobacteraceae</taxon>
        <taxon>Xylella</taxon>
    </lineage>
</organism>
<sequence>MRIVFAGTPDFAVPSLRSVTQRADVVAVYTQPDRPAGRGRELMPSPVKLEAVARGLPVYQPQTLRSPEMLEQLRVLRPDLIVVVAYGVILPEAVLAIPDDGCWNVHASLLPRWRGAAPIQRAIEAGDTETGVCLMQMEAGLDTGPVLMSLKTPINAHETSGQLHDRLAEMGAQLLSDGLGLLRAGLRPVPQPQLAAGVTYAHKLGKVEARLDWEQPAERLACRVRAFQPWPVAEVVLSGERVRIHEALALDLDHSQPPGKVLAASKEGIDVACVQGALRLCRLQREGGKAITAADYLNARRDLQVRA</sequence>
<reference key="1">
    <citation type="journal article" date="2010" name="J. Bacteriol.">
        <title>Whole genome sequences of two Xylella fastidiosa strains (M12 and M23) causing almond leaf scorch disease in California.</title>
        <authorList>
            <person name="Chen J."/>
            <person name="Xie G."/>
            <person name="Han S."/>
            <person name="Chertkov O."/>
            <person name="Sims D."/>
            <person name="Civerolo E.L."/>
        </authorList>
    </citation>
    <scope>NUCLEOTIDE SEQUENCE [LARGE SCALE GENOMIC DNA]</scope>
    <source>
        <strain>M12</strain>
    </source>
</reference>
<evidence type="ECO:0000255" key="1">
    <source>
        <dbReference type="HAMAP-Rule" id="MF_00182"/>
    </source>
</evidence>
<feature type="chain" id="PRO_1000098463" description="Methionyl-tRNA formyltransferase">
    <location>
        <begin position="1"/>
        <end position="307"/>
    </location>
</feature>
<feature type="binding site" evidence="1">
    <location>
        <begin position="108"/>
        <end position="111"/>
    </location>
    <ligand>
        <name>(6S)-5,6,7,8-tetrahydrofolate</name>
        <dbReference type="ChEBI" id="CHEBI:57453"/>
    </ligand>
</feature>